<accession>Q03656</accession>
<accession>D6W041</accession>
<gene>
    <name type="primary">SKY1</name>
    <name type="ordered locus">YMR216C</name>
    <name type="ORF">YM8261.10C</name>
</gene>
<sequence length="742" mass="83238">MGSSINYPGFVTKSAHLADTSTDASISCEEATSSQEAKKNFFQRDYNMMKKAPAPTKSKLSLALQTSKSSSSANGTVQEDTSSKTEDFSTKSIKKKPDSGVESHVSIQSDSGPQSDSDLDSDSSISSCDERNEESLKDYRPGGYHPAFKGEPYKDARYILVRKLGWGHFSTVWLAKDMVNNTHVAMKIVRGDKVYTEAAEDEIKLLQRVNDADNTKEDSMGANHILKLLDHFNHKGPNGVHVVMVFEVLGENLLALIKKYEHRGIPLIYVKQISKQLLLGLDYMHRRCGIIHTDIKPENVLMEIGDVEGIVQMVEALDKQKREAKRLQRHVSRSSDITANDSSDEKWAECQTSMPCGSSSNSKSRSIEKDLSKRCFRRPRRHTIITGSQPLPSPISSSNFFEMRAHFCGSSHNSFSSVSGNRNIPSSINNNSINNGIGIKNSNNSFLNSVPHSVTRMFINEDSNDNNNNDNSKNKNNNNNNSNNNNNEDIMNTPLHEEQLADSLSTFDISNISQSSDTNGPYISNTMDSNSNVSTDINSPENLIQIKIADLGNACWYDEHYTNSIQTREYRSPEVLLGAPWGCGADIWSTACLIFELITGDFLFEPDEGHSYTKDDDHIAQIIELLGELPSYLLRNGKYTRTFFNSRGLLRNISKLKFWPLEDVLTEKYKFSKDEAKEISDFLSPMLQLDPRKRADAGGLVNHPWLKDTLGMEEIRVPDRELYGSGSDIPGWFEEVRDHKRH</sequence>
<name>SKY1_YEAST</name>
<protein>
    <recommendedName>
        <fullName>Serine/threonine-protein kinase SKY1</fullName>
        <shortName>SRPK</shortName>
        <ecNumber>2.7.11.1</ecNumber>
    </recommendedName>
</protein>
<proteinExistence type="evidence at protein level"/>
<comment type="function">
    <text evidence="4">Constitutively active kinase, specifically and sequentially phosphorylates serine/arginine (SR)-type shuttling mRNA binding proteins in their RS dipeptide repeats.</text>
</comment>
<comment type="catalytic activity">
    <reaction>
        <text>L-seryl-[protein] + ATP = O-phospho-L-seryl-[protein] + ADP + H(+)</text>
        <dbReference type="Rhea" id="RHEA:17989"/>
        <dbReference type="Rhea" id="RHEA-COMP:9863"/>
        <dbReference type="Rhea" id="RHEA-COMP:11604"/>
        <dbReference type="ChEBI" id="CHEBI:15378"/>
        <dbReference type="ChEBI" id="CHEBI:29999"/>
        <dbReference type="ChEBI" id="CHEBI:30616"/>
        <dbReference type="ChEBI" id="CHEBI:83421"/>
        <dbReference type="ChEBI" id="CHEBI:456216"/>
        <dbReference type="EC" id="2.7.11.1"/>
    </reaction>
</comment>
<comment type="catalytic activity">
    <reaction>
        <text>L-threonyl-[protein] + ATP = O-phospho-L-threonyl-[protein] + ADP + H(+)</text>
        <dbReference type="Rhea" id="RHEA:46608"/>
        <dbReference type="Rhea" id="RHEA-COMP:11060"/>
        <dbReference type="Rhea" id="RHEA-COMP:11605"/>
        <dbReference type="ChEBI" id="CHEBI:15378"/>
        <dbReference type="ChEBI" id="CHEBI:30013"/>
        <dbReference type="ChEBI" id="CHEBI:30616"/>
        <dbReference type="ChEBI" id="CHEBI:61977"/>
        <dbReference type="ChEBI" id="CHEBI:456216"/>
        <dbReference type="EC" id="2.7.11.1"/>
    </reaction>
</comment>
<comment type="interaction">
    <interactant intactId="EBI-9800">
        <id>Q03656</id>
    </interactant>
    <interactant intactId="EBI-19374">
        <id>P35169</id>
        <label>TOR1</label>
    </interactant>
    <organismsDiffer>false</organismsDiffer>
    <experiments>2</experiments>
</comment>
<comment type="miscellaneous">
    <text evidence="5">Present with 2420 molecules/cell in log phase SD medium.</text>
</comment>
<comment type="similarity">
    <text evidence="1">Belongs to the protein kinase superfamily. Ser/Thr protein kinase family.</text>
</comment>
<dbReference type="EC" id="2.7.11.1"/>
<dbReference type="EMBL" id="Z49809">
    <property type="protein sequence ID" value="CAA89931.1"/>
    <property type="molecule type" value="Genomic_DNA"/>
</dbReference>
<dbReference type="EMBL" id="BK006946">
    <property type="protein sequence ID" value="DAA10115.1"/>
    <property type="molecule type" value="Genomic_DNA"/>
</dbReference>
<dbReference type="PIR" id="S55098">
    <property type="entry name" value="S55098"/>
</dbReference>
<dbReference type="RefSeq" id="NP_013943.1">
    <property type="nucleotide sequence ID" value="NM_001182723.1"/>
</dbReference>
<dbReference type="PDB" id="1HOW">
    <property type="method" value="X-ray"/>
    <property type="resolution" value="2.10 A"/>
    <property type="chains" value="A=138-304, A=539-742"/>
</dbReference>
<dbReference type="PDB" id="1Q8Y">
    <property type="method" value="X-ray"/>
    <property type="resolution" value="2.05 A"/>
    <property type="chains" value="A/B=138-304, A/B=539-742"/>
</dbReference>
<dbReference type="PDB" id="1Q8Z">
    <property type="method" value="X-ray"/>
    <property type="resolution" value="2.35 A"/>
    <property type="chains" value="A/B=138-304, A/B=539-742"/>
</dbReference>
<dbReference type="PDB" id="1Q97">
    <property type="method" value="X-ray"/>
    <property type="resolution" value="2.30 A"/>
    <property type="chains" value="A/B=138-304, A/B=539-742"/>
</dbReference>
<dbReference type="PDB" id="1Q99">
    <property type="method" value="X-ray"/>
    <property type="resolution" value="2.11 A"/>
    <property type="chains" value="A/B=138-304, A/B=539-742"/>
</dbReference>
<dbReference type="PDB" id="2JD5">
    <property type="method" value="X-ray"/>
    <property type="resolution" value="2.50 A"/>
    <property type="chains" value="A/B=138-742"/>
</dbReference>
<dbReference type="PDBsum" id="1HOW"/>
<dbReference type="PDBsum" id="1Q8Y"/>
<dbReference type="PDBsum" id="1Q8Z"/>
<dbReference type="PDBsum" id="1Q97"/>
<dbReference type="PDBsum" id="1Q99"/>
<dbReference type="PDBsum" id="2JD5"/>
<dbReference type="SMR" id="Q03656"/>
<dbReference type="BioGRID" id="35394">
    <property type="interactions" value="420"/>
</dbReference>
<dbReference type="DIP" id="DIP-2884N"/>
<dbReference type="FunCoup" id="Q03656">
    <property type="interactions" value="654"/>
</dbReference>
<dbReference type="IntAct" id="Q03656">
    <property type="interactions" value="17"/>
</dbReference>
<dbReference type="MINT" id="Q03656"/>
<dbReference type="STRING" id="4932.YMR216C"/>
<dbReference type="GlyGen" id="Q03656">
    <property type="glycosylation" value="3 sites, 1 O-linked glycan (3 sites)"/>
</dbReference>
<dbReference type="iPTMnet" id="Q03656"/>
<dbReference type="PaxDb" id="4932-YMR216C"/>
<dbReference type="PeptideAtlas" id="Q03656"/>
<dbReference type="EnsemblFungi" id="YMR216C_mRNA">
    <property type="protein sequence ID" value="YMR216C"/>
    <property type="gene ID" value="YMR216C"/>
</dbReference>
<dbReference type="GeneID" id="855256"/>
<dbReference type="KEGG" id="sce:YMR216C"/>
<dbReference type="AGR" id="SGD:S000004829"/>
<dbReference type="SGD" id="S000004829">
    <property type="gene designation" value="SKY1"/>
</dbReference>
<dbReference type="VEuPathDB" id="FungiDB:YMR216C"/>
<dbReference type="eggNOG" id="KOG1290">
    <property type="taxonomic scope" value="Eukaryota"/>
</dbReference>
<dbReference type="GeneTree" id="ENSGT00940000170102"/>
<dbReference type="HOGENOM" id="CLU_000288_81_8_1"/>
<dbReference type="InParanoid" id="Q03656"/>
<dbReference type="OMA" id="NHKGPNG"/>
<dbReference type="OrthoDB" id="2649at2759"/>
<dbReference type="BioCyc" id="YEAST:G3O-32899-MONOMER"/>
<dbReference type="BioGRID-ORCS" id="855256">
    <property type="hits" value="1 hit in 13 CRISPR screens"/>
</dbReference>
<dbReference type="EvolutionaryTrace" id="Q03656"/>
<dbReference type="PRO" id="PR:Q03656"/>
<dbReference type="Proteomes" id="UP000002311">
    <property type="component" value="Chromosome XIII"/>
</dbReference>
<dbReference type="RNAct" id="Q03656">
    <property type="molecule type" value="protein"/>
</dbReference>
<dbReference type="GO" id="GO:0005737">
    <property type="term" value="C:cytoplasm"/>
    <property type="evidence" value="ECO:0000314"/>
    <property type="project" value="SGD"/>
</dbReference>
<dbReference type="GO" id="GO:0010494">
    <property type="term" value="C:cytoplasmic stress granule"/>
    <property type="evidence" value="ECO:0000314"/>
    <property type="project" value="SGD"/>
</dbReference>
<dbReference type="GO" id="GO:0005634">
    <property type="term" value="C:nucleus"/>
    <property type="evidence" value="ECO:0000318"/>
    <property type="project" value="GO_Central"/>
</dbReference>
<dbReference type="GO" id="GO:0005524">
    <property type="term" value="F:ATP binding"/>
    <property type="evidence" value="ECO:0007669"/>
    <property type="project" value="UniProtKB-KW"/>
</dbReference>
<dbReference type="GO" id="GO:0004672">
    <property type="term" value="F:protein kinase activity"/>
    <property type="evidence" value="ECO:0007005"/>
    <property type="project" value="SGD"/>
</dbReference>
<dbReference type="GO" id="GO:0106310">
    <property type="term" value="F:protein serine kinase activity"/>
    <property type="evidence" value="ECO:0007669"/>
    <property type="project" value="RHEA"/>
</dbReference>
<dbReference type="GO" id="GO:0004674">
    <property type="term" value="F:protein serine/threonine kinase activity"/>
    <property type="evidence" value="ECO:0000314"/>
    <property type="project" value="SGD"/>
</dbReference>
<dbReference type="GO" id="GO:0030003">
    <property type="term" value="P:intracellular monoatomic cation homeostasis"/>
    <property type="evidence" value="ECO:0000315"/>
    <property type="project" value="SGD"/>
</dbReference>
<dbReference type="GO" id="GO:0006873">
    <property type="term" value="P:intracellular monoatomic ion homeostasis"/>
    <property type="evidence" value="ECO:0000315"/>
    <property type="project" value="SGD"/>
</dbReference>
<dbReference type="GO" id="GO:0006376">
    <property type="term" value="P:mRNA splice site recognition"/>
    <property type="evidence" value="ECO:0000316"/>
    <property type="project" value="SGD"/>
</dbReference>
<dbReference type="GO" id="GO:0042307">
    <property type="term" value="P:positive regulation of protein import into nucleus"/>
    <property type="evidence" value="ECO:0000315"/>
    <property type="project" value="SGD"/>
</dbReference>
<dbReference type="GO" id="GO:0008361">
    <property type="term" value="P:regulation of cell size"/>
    <property type="evidence" value="ECO:0007001"/>
    <property type="project" value="SGD"/>
</dbReference>
<dbReference type="GO" id="GO:0050684">
    <property type="term" value="P:regulation of mRNA processing"/>
    <property type="evidence" value="ECO:0000318"/>
    <property type="project" value="GO_Central"/>
</dbReference>
<dbReference type="GO" id="GO:0009410">
    <property type="term" value="P:response to xenobiotic stimulus"/>
    <property type="evidence" value="ECO:0000315"/>
    <property type="project" value="SGD"/>
</dbReference>
<dbReference type="GO" id="GO:0000245">
    <property type="term" value="P:spliceosomal complex assembly"/>
    <property type="evidence" value="ECO:0000318"/>
    <property type="project" value="GO_Central"/>
</dbReference>
<dbReference type="GO" id="GO:0035617">
    <property type="term" value="P:stress granule disassembly"/>
    <property type="evidence" value="ECO:0000314"/>
    <property type="project" value="SGD"/>
</dbReference>
<dbReference type="FunFam" id="1.10.510.10:FF:001045">
    <property type="entry name" value="Serine/threonine-protein kinase SKY1"/>
    <property type="match status" value="1"/>
</dbReference>
<dbReference type="FunFam" id="1.10.510.10:FF:000275">
    <property type="entry name" value="SRSF protein kinase 2 isoform X3"/>
    <property type="match status" value="1"/>
</dbReference>
<dbReference type="Gene3D" id="3.30.200.20">
    <property type="entry name" value="Phosphorylase Kinase, domain 1"/>
    <property type="match status" value="1"/>
</dbReference>
<dbReference type="Gene3D" id="1.10.510.10">
    <property type="entry name" value="Transferase(Phosphotransferase) domain 1"/>
    <property type="match status" value="2"/>
</dbReference>
<dbReference type="InterPro" id="IPR011009">
    <property type="entry name" value="Kinase-like_dom_sf"/>
</dbReference>
<dbReference type="InterPro" id="IPR000719">
    <property type="entry name" value="Prot_kinase_dom"/>
</dbReference>
<dbReference type="InterPro" id="IPR017441">
    <property type="entry name" value="Protein_kinase_ATP_BS"/>
</dbReference>
<dbReference type="InterPro" id="IPR008271">
    <property type="entry name" value="Ser/Thr_kinase_AS"/>
</dbReference>
<dbReference type="InterPro" id="IPR051334">
    <property type="entry name" value="SRPK"/>
</dbReference>
<dbReference type="PANTHER" id="PTHR47634">
    <property type="entry name" value="PROTEIN KINASE DOMAIN-CONTAINING PROTEIN-RELATED"/>
    <property type="match status" value="1"/>
</dbReference>
<dbReference type="PANTHER" id="PTHR47634:SF9">
    <property type="entry name" value="PROTEIN KINASE DOMAIN-CONTAINING PROTEIN-RELATED"/>
    <property type="match status" value="1"/>
</dbReference>
<dbReference type="Pfam" id="PF00069">
    <property type="entry name" value="Pkinase"/>
    <property type="match status" value="2"/>
</dbReference>
<dbReference type="SMART" id="SM00220">
    <property type="entry name" value="S_TKc"/>
    <property type="match status" value="1"/>
</dbReference>
<dbReference type="SUPFAM" id="SSF56112">
    <property type="entry name" value="Protein kinase-like (PK-like)"/>
    <property type="match status" value="1"/>
</dbReference>
<dbReference type="PROSITE" id="PS00107">
    <property type="entry name" value="PROTEIN_KINASE_ATP"/>
    <property type="match status" value="1"/>
</dbReference>
<dbReference type="PROSITE" id="PS50011">
    <property type="entry name" value="PROTEIN_KINASE_DOM"/>
    <property type="match status" value="1"/>
</dbReference>
<dbReference type="PROSITE" id="PS00108">
    <property type="entry name" value="PROTEIN_KINASE_ST"/>
    <property type="match status" value="1"/>
</dbReference>
<evidence type="ECO:0000255" key="1">
    <source>
        <dbReference type="PROSITE-ProRule" id="PRU00159"/>
    </source>
</evidence>
<evidence type="ECO:0000255" key="2">
    <source>
        <dbReference type="PROSITE-ProRule" id="PRU10027"/>
    </source>
</evidence>
<evidence type="ECO:0000256" key="3">
    <source>
        <dbReference type="SAM" id="MobiDB-lite"/>
    </source>
</evidence>
<evidence type="ECO:0000269" key="4">
    <source>
    </source>
</evidence>
<evidence type="ECO:0000269" key="5">
    <source>
    </source>
</evidence>
<evidence type="ECO:0007744" key="6">
    <source>
    </source>
</evidence>
<evidence type="ECO:0007744" key="7">
    <source>
    </source>
</evidence>
<evidence type="ECO:0007744" key="8">
    <source>
    </source>
</evidence>
<evidence type="ECO:0007829" key="9">
    <source>
        <dbReference type="PDB" id="1HOW"/>
    </source>
</evidence>
<evidence type="ECO:0007829" key="10">
    <source>
        <dbReference type="PDB" id="1Q8Y"/>
    </source>
</evidence>
<evidence type="ECO:0007829" key="11">
    <source>
        <dbReference type="PDB" id="1Q99"/>
    </source>
</evidence>
<keyword id="KW-0002">3D-structure</keyword>
<keyword id="KW-0067">ATP-binding</keyword>
<keyword id="KW-0418">Kinase</keyword>
<keyword id="KW-0547">Nucleotide-binding</keyword>
<keyword id="KW-0597">Phosphoprotein</keyword>
<keyword id="KW-1185">Reference proteome</keyword>
<keyword id="KW-0723">Serine/threonine-protein kinase</keyword>
<keyword id="KW-0808">Transferase</keyword>
<reference key="1">
    <citation type="journal article" date="1997" name="Nature">
        <title>The nucleotide sequence of Saccharomyces cerevisiae chromosome XIII.</title>
        <authorList>
            <person name="Bowman S."/>
            <person name="Churcher C.M."/>
            <person name="Badcock K."/>
            <person name="Brown D."/>
            <person name="Chillingworth T."/>
            <person name="Connor R."/>
            <person name="Dedman K."/>
            <person name="Devlin K."/>
            <person name="Gentles S."/>
            <person name="Hamlin N."/>
            <person name="Hunt S."/>
            <person name="Jagels K."/>
            <person name="Lye G."/>
            <person name="Moule S."/>
            <person name="Odell C."/>
            <person name="Pearson D."/>
            <person name="Rajandream M.A."/>
            <person name="Rice P."/>
            <person name="Skelton J."/>
            <person name="Walsh S.V."/>
            <person name="Whitehead S."/>
            <person name="Barrell B.G."/>
        </authorList>
    </citation>
    <scope>NUCLEOTIDE SEQUENCE [LARGE SCALE GENOMIC DNA]</scope>
    <source>
        <strain>ATCC 204508 / S288c</strain>
    </source>
</reference>
<reference key="2">
    <citation type="journal article" date="2014" name="G3 (Bethesda)">
        <title>The reference genome sequence of Saccharomyces cerevisiae: Then and now.</title>
        <authorList>
            <person name="Engel S.R."/>
            <person name="Dietrich F.S."/>
            <person name="Fisk D.G."/>
            <person name="Binkley G."/>
            <person name="Balakrishnan R."/>
            <person name="Costanzo M.C."/>
            <person name="Dwight S.S."/>
            <person name="Hitz B.C."/>
            <person name="Karra K."/>
            <person name="Nash R.S."/>
            <person name="Weng S."/>
            <person name="Wong E.D."/>
            <person name="Lloyd P."/>
            <person name="Skrzypek M.S."/>
            <person name="Miyasato S.R."/>
            <person name="Simison M."/>
            <person name="Cherry J.M."/>
        </authorList>
    </citation>
    <scope>GENOME REANNOTATION</scope>
    <source>
        <strain>ATCC 204508 / S288c</strain>
    </source>
</reference>
<reference key="3">
    <citation type="journal article" date="2003" name="Nature">
        <title>Global analysis of protein expression in yeast.</title>
        <authorList>
            <person name="Ghaemmaghami S."/>
            <person name="Huh W.-K."/>
            <person name="Bower K."/>
            <person name="Howson R.W."/>
            <person name="Belle A."/>
            <person name="Dephoure N."/>
            <person name="O'Shea E.K."/>
            <person name="Weissman J.S."/>
        </authorList>
    </citation>
    <scope>LEVEL OF PROTEIN EXPRESSION [LARGE SCALE ANALYSIS]</scope>
</reference>
<reference key="4">
    <citation type="journal article" date="2007" name="J. Proteome Res.">
        <title>Large-scale phosphorylation analysis of alpha-factor-arrested Saccharomyces cerevisiae.</title>
        <authorList>
            <person name="Li X."/>
            <person name="Gerber S.A."/>
            <person name="Rudner A.D."/>
            <person name="Beausoleil S.A."/>
            <person name="Haas W."/>
            <person name="Villen J."/>
            <person name="Elias J.E."/>
            <person name="Gygi S.P."/>
        </authorList>
    </citation>
    <scope>PHOSPHORYLATION [LARGE SCALE ANALYSIS] AT THR-383; SER-393; SER-449 AND SER-453</scope>
    <scope>IDENTIFICATION BY MASS SPECTROMETRY [LARGE SCALE ANALYSIS]</scope>
    <source>
        <strain>ADR376</strain>
    </source>
</reference>
<reference key="5">
    <citation type="journal article" date="2008" name="Mol. Cell. Proteomics">
        <title>A multidimensional chromatography technology for in-depth phosphoproteome analysis.</title>
        <authorList>
            <person name="Albuquerque C.P."/>
            <person name="Smolka M.B."/>
            <person name="Payne S.H."/>
            <person name="Bafna V."/>
            <person name="Eng J."/>
            <person name="Zhou H."/>
        </authorList>
    </citation>
    <scope>PHOSPHORYLATION [LARGE SCALE ANALYSIS] AT SER-393; SER-432; SER-445; SER-449 AND SER-453</scope>
    <scope>IDENTIFICATION BY MASS SPECTROMETRY [LARGE SCALE ANALYSIS]</scope>
</reference>
<reference key="6">
    <citation type="journal article" date="2009" name="Science">
        <title>Global analysis of Cdk1 substrate phosphorylation sites provides insights into evolution.</title>
        <authorList>
            <person name="Holt L.J."/>
            <person name="Tuch B.B."/>
            <person name="Villen J."/>
            <person name="Johnson A.D."/>
            <person name="Gygi S.P."/>
            <person name="Morgan D.O."/>
        </authorList>
    </citation>
    <scope>PHOSPHORYLATION [LARGE SCALE ANALYSIS] AT THR-383; THR-386; SER-388; SER-393; SER-410; SER-427; SER-432; SER-445; SER-449 AND SER-453</scope>
    <scope>IDENTIFICATION BY MASS SPECTROMETRY [LARGE SCALE ANALYSIS]</scope>
</reference>
<reference key="7">
    <citation type="journal article" date="2001" name="Nat. Struct. Biol.">
        <title>The structure of Sky1p reveals a novel mechanism for constitutive activity.</title>
        <authorList>
            <person name="Nolen B."/>
            <person name="Yun C.Y."/>
            <person name="Wong C.F."/>
            <person name="McCammon J.A."/>
            <person name="Fu X.-D."/>
            <person name="Ghosh G."/>
        </authorList>
    </citation>
    <scope>X-RAY CRYSTALLOGRAPHY (2.1 ANGSTROMS) OF 138-742</scope>
    <scope>FUNCTION</scope>
</reference>
<reference key="8">
    <citation type="journal article" date="2003" name="Biochemistry">
        <title>Nucleotide-induced conformational changes in the Saccharomyces cerevisiae SR protein kinase, Sky1p, revealed by X-ray crystallography.</title>
        <authorList>
            <person name="Nolen B."/>
            <person name="Ngo J."/>
            <person name="Chakrabarti S."/>
            <person name="Vu D."/>
            <person name="Adams J.A."/>
            <person name="Ghosh G."/>
        </authorList>
    </citation>
    <scope>X-RAY CRYSTALLOGRAPHY (2.05 ANGSTROMS) OF 138-742 ALONE AND IN COMPLEX WITH ADP AND ATP</scope>
</reference>
<feature type="chain" id="PRO_0000086658" description="Serine/threonine-protein kinase SKY1">
    <location>
        <begin position="1"/>
        <end position="742"/>
    </location>
</feature>
<feature type="domain" description="Protein kinase" evidence="1">
    <location>
        <begin position="158"/>
        <end position="706"/>
    </location>
</feature>
<feature type="region of interest" description="Disordered" evidence="3">
    <location>
        <begin position="13"/>
        <end position="146"/>
    </location>
</feature>
<feature type="region of interest" description="Disordered" evidence="3">
    <location>
        <begin position="459"/>
        <end position="491"/>
    </location>
</feature>
<feature type="compositionally biased region" description="Polar residues" evidence="3">
    <location>
        <begin position="19"/>
        <end position="35"/>
    </location>
</feature>
<feature type="compositionally biased region" description="Low complexity" evidence="3">
    <location>
        <begin position="56"/>
        <end position="73"/>
    </location>
</feature>
<feature type="compositionally biased region" description="Basic and acidic residues" evidence="3">
    <location>
        <begin position="81"/>
        <end position="101"/>
    </location>
</feature>
<feature type="compositionally biased region" description="Low complexity" evidence="3">
    <location>
        <begin position="106"/>
        <end position="127"/>
    </location>
</feature>
<feature type="compositionally biased region" description="Basic and acidic residues" evidence="3">
    <location>
        <begin position="128"/>
        <end position="140"/>
    </location>
</feature>
<feature type="compositionally biased region" description="Low complexity" evidence="3">
    <location>
        <begin position="465"/>
        <end position="489"/>
    </location>
</feature>
<feature type="active site" description="Proton acceptor" evidence="1 2">
    <location>
        <position position="294"/>
    </location>
</feature>
<feature type="binding site" evidence="1">
    <location>
        <begin position="164"/>
        <end position="172"/>
    </location>
    <ligand>
        <name>ATP</name>
        <dbReference type="ChEBI" id="CHEBI:30616"/>
    </ligand>
</feature>
<feature type="binding site" evidence="1">
    <location>
        <position position="187"/>
    </location>
    <ligand>
        <name>ATP</name>
        <dbReference type="ChEBI" id="CHEBI:30616"/>
    </ligand>
</feature>
<feature type="modified residue" description="Phosphothreonine" evidence="6 8">
    <location>
        <position position="383"/>
    </location>
</feature>
<feature type="modified residue" description="Phosphothreonine" evidence="8">
    <location>
        <position position="386"/>
    </location>
</feature>
<feature type="modified residue" description="Phosphoserine" evidence="8">
    <location>
        <position position="388"/>
    </location>
</feature>
<feature type="modified residue" description="Phosphoserine" evidence="6 7 8">
    <location>
        <position position="393"/>
    </location>
</feature>
<feature type="modified residue" description="Phosphoserine" evidence="8">
    <location>
        <position position="410"/>
    </location>
</feature>
<feature type="modified residue" description="Phosphoserine" evidence="8">
    <location>
        <position position="427"/>
    </location>
</feature>
<feature type="modified residue" description="Phosphoserine" evidence="7 8">
    <location>
        <position position="432"/>
    </location>
</feature>
<feature type="modified residue" description="Phosphoserine" evidence="7 8">
    <location>
        <position position="445"/>
    </location>
</feature>
<feature type="modified residue" description="Phosphoserine" evidence="6 7 8">
    <location>
        <position position="449"/>
    </location>
</feature>
<feature type="modified residue" description="Phosphoserine" evidence="6 7 8">
    <location>
        <position position="453"/>
    </location>
</feature>
<feature type="turn" evidence="10">
    <location>
        <begin position="154"/>
        <end position="157"/>
    </location>
</feature>
<feature type="strand" evidence="10">
    <location>
        <begin position="158"/>
        <end position="166"/>
    </location>
</feature>
<feature type="strand" evidence="10">
    <location>
        <begin position="168"/>
        <end position="177"/>
    </location>
</feature>
<feature type="turn" evidence="10">
    <location>
        <begin position="178"/>
        <end position="181"/>
    </location>
</feature>
<feature type="strand" evidence="10">
    <location>
        <begin position="182"/>
        <end position="189"/>
    </location>
</feature>
<feature type="helix" evidence="10">
    <location>
        <begin position="193"/>
        <end position="211"/>
    </location>
</feature>
<feature type="helix" evidence="10">
    <location>
        <begin position="216"/>
        <end position="222"/>
    </location>
</feature>
<feature type="strand" evidence="10">
    <location>
        <begin position="230"/>
        <end position="236"/>
    </location>
</feature>
<feature type="strand" evidence="10">
    <location>
        <begin position="239"/>
        <end position="246"/>
    </location>
</feature>
<feature type="helix" evidence="10">
    <location>
        <begin position="253"/>
        <end position="259"/>
    </location>
</feature>
<feature type="turn" evidence="10">
    <location>
        <begin position="260"/>
        <end position="262"/>
    </location>
</feature>
<feature type="helix" evidence="10">
    <location>
        <begin position="267"/>
        <end position="286"/>
    </location>
</feature>
<feature type="helix" evidence="10">
    <location>
        <begin position="297"/>
        <end position="299"/>
    </location>
</feature>
<feature type="strand" evidence="10">
    <location>
        <begin position="300"/>
        <end position="304"/>
    </location>
</feature>
<feature type="turn" evidence="10">
    <location>
        <begin position="539"/>
        <end position="542"/>
    </location>
</feature>
<feature type="strand" evidence="10">
    <location>
        <begin position="543"/>
        <end position="548"/>
    </location>
</feature>
<feature type="helix" evidence="9">
    <location>
        <begin position="551"/>
        <end position="553"/>
    </location>
</feature>
<feature type="helix" evidence="10">
    <location>
        <begin position="568"/>
        <end position="570"/>
    </location>
</feature>
<feature type="helix" evidence="10">
    <location>
        <begin position="573"/>
        <end position="577"/>
    </location>
</feature>
<feature type="helix" evidence="10">
    <location>
        <begin position="584"/>
        <end position="599"/>
    </location>
</feature>
<feature type="strand" evidence="10">
    <location>
        <begin position="610"/>
        <end position="612"/>
    </location>
</feature>
<feature type="helix" evidence="10">
    <location>
        <begin position="615"/>
        <end position="626"/>
    </location>
</feature>
<feature type="helix" evidence="10">
    <location>
        <begin position="631"/>
        <end position="636"/>
    </location>
</feature>
<feature type="helix" evidence="10">
    <location>
        <begin position="640"/>
        <end position="643"/>
    </location>
</feature>
<feature type="strand" evidence="10">
    <location>
        <begin position="650"/>
        <end position="652"/>
    </location>
</feature>
<feature type="helix" evidence="10">
    <location>
        <begin position="661"/>
        <end position="667"/>
    </location>
</feature>
<feature type="helix" evidence="10">
    <location>
        <begin position="673"/>
        <end position="683"/>
    </location>
</feature>
<feature type="helix" evidence="10">
    <location>
        <begin position="684"/>
        <end position="687"/>
    </location>
</feature>
<feature type="turn" evidence="10">
    <location>
        <begin position="691"/>
        <end position="693"/>
    </location>
</feature>
<feature type="helix" evidence="10">
    <location>
        <begin position="697"/>
        <end position="701"/>
    </location>
</feature>
<feature type="helix" evidence="10">
    <location>
        <begin position="704"/>
        <end position="706"/>
    </location>
</feature>
<feature type="turn" evidence="11">
    <location>
        <begin position="710"/>
        <end position="714"/>
    </location>
</feature>
<feature type="helix" evidence="11">
    <location>
        <begin position="726"/>
        <end position="728"/>
    </location>
</feature>
<feature type="strand" evidence="10">
    <location>
        <begin position="732"/>
        <end position="734"/>
    </location>
</feature>
<organism>
    <name type="scientific">Saccharomyces cerevisiae (strain ATCC 204508 / S288c)</name>
    <name type="common">Baker's yeast</name>
    <dbReference type="NCBI Taxonomy" id="559292"/>
    <lineage>
        <taxon>Eukaryota</taxon>
        <taxon>Fungi</taxon>
        <taxon>Dikarya</taxon>
        <taxon>Ascomycota</taxon>
        <taxon>Saccharomycotina</taxon>
        <taxon>Saccharomycetes</taxon>
        <taxon>Saccharomycetales</taxon>
        <taxon>Saccharomycetaceae</taxon>
        <taxon>Saccharomyces</taxon>
    </lineage>
</organism>